<name>PPE20_MYCTO</name>
<feature type="chain" id="PRO_0000428082" description="Uncharacterized PPE family protein PPE20">
    <location>
        <begin position="1"/>
        <end position="539"/>
    </location>
</feature>
<feature type="region of interest" description="Disordered" evidence="2">
    <location>
        <begin position="179"/>
        <end position="203"/>
    </location>
</feature>
<feature type="region of interest" description="Disordered" evidence="2">
    <location>
        <begin position="433"/>
        <end position="459"/>
    </location>
</feature>
<feature type="compositionally biased region" description="Acidic residues" evidence="2">
    <location>
        <begin position="182"/>
        <end position="192"/>
    </location>
</feature>
<feature type="compositionally biased region" description="Low complexity" evidence="2">
    <location>
        <begin position="433"/>
        <end position="442"/>
    </location>
</feature>
<feature type="compositionally biased region" description="Basic residues" evidence="2">
    <location>
        <begin position="443"/>
        <end position="455"/>
    </location>
</feature>
<dbReference type="EMBL" id="AE000516">
    <property type="protein sequence ID" value="AAK45696.1"/>
    <property type="molecule type" value="Genomic_DNA"/>
</dbReference>
<dbReference type="PIR" id="A70899">
    <property type="entry name" value="A70899"/>
</dbReference>
<dbReference type="RefSeq" id="WP_003407230.1">
    <property type="nucleotide sequence ID" value="NZ_KK341227.1"/>
</dbReference>
<dbReference type="SMR" id="P9WI22"/>
<dbReference type="KEGG" id="mtc:MT1431"/>
<dbReference type="PATRIC" id="fig|83331.31.peg.1537"/>
<dbReference type="HOGENOM" id="CLU_000243_5_2_11"/>
<dbReference type="Proteomes" id="UP000001020">
    <property type="component" value="Chromosome"/>
</dbReference>
<dbReference type="GO" id="GO:0005576">
    <property type="term" value="C:extracellular region"/>
    <property type="evidence" value="ECO:0007669"/>
    <property type="project" value="UniProtKB-SubCell"/>
</dbReference>
<dbReference type="GO" id="GO:0052572">
    <property type="term" value="P:response to host immune response"/>
    <property type="evidence" value="ECO:0007669"/>
    <property type="project" value="TreeGrafter"/>
</dbReference>
<dbReference type="Gene3D" id="1.20.1260.20">
    <property type="entry name" value="PPE superfamily"/>
    <property type="match status" value="1"/>
</dbReference>
<dbReference type="InterPro" id="IPR043641">
    <property type="entry name" value="PPE-PPW_C"/>
</dbReference>
<dbReference type="InterPro" id="IPR000030">
    <property type="entry name" value="PPE_dom"/>
</dbReference>
<dbReference type="InterPro" id="IPR038332">
    <property type="entry name" value="PPE_sf"/>
</dbReference>
<dbReference type="PANTHER" id="PTHR46766">
    <property type="entry name" value="GLUTAMINE-RICH PROTEIN 2"/>
    <property type="match status" value="1"/>
</dbReference>
<dbReference type="PANTHER" id="PTHR46766:SF1">
    <property type="entry name" value="GLUTAMINE-RICH PROTEIN 2"/>
    <property type="match status" value="1"/>
</dbReference>
<dbReference type="Pfam" id="PF00823">
    <property type="entry name" value="PPE"/>
    <property type="match status" value="1"/>
</dbReference>
<dbReference type="Pfam" id="PF18878">
    <property type="entry name" value="PPE-PPW"/>
    <property type="match status" value="1"/>
</dbReference>
<dbReference type="SUPFAM" id="SSF140459">
    <property type="entry name" value="PE/PPE dimer-like"/>
    <property type="match status" value="1"/>
</dbReference>
<evidence type="ECO:0000250" key="1">
    <source>
        <dbReference type="UniProtKB" id="P9WI23"/>
    </source>
</evidence>
<evidence type="ECO:0000256" key="2">
    <source>
        <dbReference type="SAM" id="MobiDB-lite"/>
    </source>
</evidence>
<evidence type="ECO:0000305" key="3"/>
<organism>
    <name type="scientific">Mycobacterium tuberculosis (strain CDC 1551 / Oshkosh)</name>
    <dbReference type="NCBI Taxonomy" id="83331"/>
    <lineage>
        <taxon>Bacteria</taxon>
        <taxon>Bacillati</taxon>
        <taxon>Actinomycetota</taxon>
        <taxon>Actinomycetes</taxon>
        <taxon>Mycobacteriales</taxon>
        <taxon>Mycobacteriaceae</taxon>
        <taxon>Mycobacterium</taxon>
        <taxon>Mycobacterium tuberculosis complex</taxon>
    </lineage>
</organism>
<protein>
    <recommendedName>
        <fullName evidence="1">Uncharacterized PPE family protein PPE20</fullName>
    </recommendedName>
</protein>
<gene>
    <name type="primary">PPE20</name>
    <name type="ordered locus">MT1431</name>
</gene>
<accession>P9WI22</accession>
<accession>L0T6I0</accession>
<accession>Q79FP7</accession>
<accession>Q7D8H6</accession>
<comment type="subcellular location">
    <subcellularLocation>
        <location evidence="1">Secreted</location>
    </subcellularLocation>
    <text evidence="1">Secreted via the ESX-3 / type VII secretion system (T7SS).</text>
</comment>
<comment type="similarity">
    <text evidence="3">Belongs to the mycobacterial PPE family.</text>
</comment>
<keyword id="KW-1185">Reference proteome</keyword>
<keyword id="KW-0964">Secreted</keyword>
<sequence>MTEPWIAFPPEVHSAMLNYGAGVGPMLISATQNGELSAQYAEAASEVEELLGVVASEGWQGQAAEAFVAAYMPFLAWLIQASADCVEMAAQQHVVIEAYTAAVELMPTQVELAANQIKLAVLVATNFFGINTIPIAINEAEYVEMWVRAATTMATYSTVSRSALSAMPHTSPPPLILKSDELLPDTGEDSDEDGHNHGGHSHGGHARMIDNFFAEILRGVSAGRIVWDPVNGTLNGLDYDDYVYPGHAIWWLARGLEFFQDGEQFGELLFTNPTGAFQFLLYVVVVDLPTHIAQIATWLGQYPQLLSAALTGVIAHLGAITGLAGLSGLSAIPSAAIPAVVPELTPVAAAPPMLAVAGVGPAVAAPGMLPASAPAPAAAAGATAAGPTPPATGFGGFPPYLVGGGGPGIGFGSGQSAHAKAAASDSAAAESAAQASARAQARAARRGRSAAKARGHRDEFVTMDMGFDAAAPAPEHQPGARASDCGAGPIGFAGTVRKEAVVKAAGLTTLAGDDFGGGPTMPMMPGTWTHDQGVFDEHR</sequence>
<proteinExistence type="inferred from homology"/>
<reference key="1">
    <citation type="journal article" date="2002" name="J. Bacteriol.">
        <title>Whole-genome comparison of Mycobacterium tuberculosis clinical and laboratory strains.</title>
        <authorList>
            <person name="Fleischmann R.D."/>
            <person name="Alland D."/>
            <person name="Eisen J.A."/>
            <person name="Carpenter L."/>
            <person name="White O."/>
            <person name="Peterson J.D."/>
            <person name="DeBoy R.T."/>
            <person name="Dodson R.J."/>
            <person name="Gwinn M.L."/>
            <person name="Haft D.H."/>
            <person name="Hickey E.K."/>
            <person name="Kolonay J.F."/>
            <person name="Nelson W.C."/>
            <person name="Umayam L.A."/>
            <person name="Ermolaeva M.D."/>
            <person name="Salzberg S.L."/>
            <person name="Delcher A."/>
            <person name="Utterback T.R."/>
            <person name="Weidman J.F."/>
            <person name="Khouri H.M."/>
            <person name="Gill J."/>
            <person name="Mikula A."/>
            <person name="Bishai W."/>
            <person name="Jacobs W.R. Jr."/>
            <person name="Venter J.C."/>
            <person name="Fraser C.M."/>
        </authorList>
    </citation>
    <scope>NUCLEOTIDE SEQUENCE [LARGE SCALE GENOMIC DNA]</scope>
    <source>
        <strain>CDC 1551 / Oshkosh</strain>
    </source>
</reference>